<name>EPS8_MOUSE</name>
<accession>Q08509</accession>
<accession>Q3TM41</accession>
<organism>
    <name type="scientific">Mus musculus</name>
    <name type="common">Mouse</name>
    <dbReference type="NCBI Taxonomy" id="10090"/>
    <lineage>
        <taxon>Eukaryota</taxon>
        <taxon>Metazoa</taxon>
        <taxon>Chordata</taxon>
        <taxon>Craniata</taxon>
        <taxon>Vertebrata</taxon>
        <taxon>Euteleostomi</taxon>
        <taxon>Mammalia</taxon>
        <taxon>Eutheria</taxon>
        <taxon>Euarchontoglires</taxon>
        <taxon>Glires</taxon>
        <taxon>Rodentia</taxon>
        <taxon>Myomorpha</taxon>
        <taxon>Muroidea</taxon>
        <taxon>Muridae</taxon>
        <taxon>Murinae</taxon>
        <taxon>Mus</taxon>
        <taxon>Mus</taxon>
    </lineage>
</organism>
<gene>
    <name type="primary">Eps8</name>
</gene>
<reference key="1">
    <citation type="journal article" date="1993" name="EMBO J.">
        <title>Eps8, a substrate for the epidermal growth factor receptor kinase, enhances EGF-dependent mitogenic signals.</title>
        <authorList>
            <person name="Fazioli F."/>
            <person name="Minichiello L."/>
            <person name="Matoska V."/>
            <person name="Castagnino P."/>
            <person name="Miki T."/>
            <person name="Wong W.T."/>
            <person name="di Fiore P.P."/>
        </authorList>
    </citation>
    <scope>NUCLEOTIDE SEQUENCE [MRNA]</scope>
    <scope>FUNCTION IN CELL GROWTH</scope>
    <scope>INTERACTION WITH EGFR</scope>
    <scope>PHOSPHORYLATION</scope>
</reference>
<reference key="2">
    <citation type="journal article" date="2005" name="Science">
        <title>The transcriptional landscape of the mammalian genome.</title>
        <authorList>
            <person name="Carninci P."/>
            <person name="Kasukawa T."/>
            <person name="Katayama S."/>
            <person name="Gough J."/>
            <person name="Frith M.C."/>
            <person name="Maeda N."/>
            <person name="Oyama R."/>
            <person name="Ravasi T."/>
            <person name="Lenhard B."/>
            <person name="Wells C."/>
            <person name="Kodzius R."/>
            <person name="Shimokawa K."/>
            <person name="Bajic V.B."/>
            <person name="Brenner S.E."/>
            <person name="Batalov S."/>
            <person name="Forrest A.R."/>
            <person name="Zavolan M."/>
            <person name="Davis M.J."/>
            <person name="Wilming L.G."/>
            <person name="Aidinis V."/>
            <person name="Allen J.E."/>
            <person name="Ambesi-Impiombato A."/>
            <person name="Apweiler R."/>
            <person name="Aturaliya R.N."/>
            <person name="Bailey T.L."/>
            <person name="Bansal M."/>
            <person name="Baxter L."/>
            <person name="Beisel K.W."/>
            <person name="Bersano T."/>
            <person name="Bono H."/>
            <person name="Chalk A.M."/>
            <person name="Chiu K.P."/>
            <person name="Choudhary V."/>
            <person name="Christoffels A."/>
            <person name="Clutterbuck D.R."/>
            <person name="Crowe M.L."/>
            <person name="Dalla E."/>
            <person name="Dalrymple B.P."/>
            <person name="de Bono B."/>
            <person name="Della Gatta G."/>
            <person name="di Bernardo D."/>
            <person name="Down T."/>
            <person name="Engstrom P."/>
            <person name="Fagiolini M."/>
            <person name="Faulkner G."/>
            <person name="Fletcher C.F."/>
            <person name="Fukushima T."/>
            <person name="Furuno M."/>
            <person name="Futaki S."/>
            <person name="Gariboldi M."/>
            <person name="Georgii-Hemming P."/>
            <person name="Gingeras T.R."/>
            <person name="Gojobori T."/>
            <person name="Green R.E."/>
            <person name="Gustincich S."/>
            <person name="Harbers M."/>
            <person name="Hayashi Y."/>
            <person name="Hensch T.K."/>
            <person name="Hirokawa N."/>
            <person name="Hill D."/>
            <person name="Huminiecki L."/>
            <person name="Iacono M."/>
            <person name="Ikeo K."/>
            <person name="Iwama A."/>
            <person name="Ishikawa T."/>
            <person name="Jakt M."/>
            <person name="Kanapin A."/>
            <person name="Katoh M."/>
            <person name="Kawasawa Y."/>
            <person name="Kelso J."/>
            <person name="Kitamura H."/>
            <person name="Kitano H."/>
            <person name="Kollias G."/>
            <person name="Krishnan S.P."/>
            <person name="Kruger A."/>
            <person name="Kummerfeld S.K."/>
            <person name="Kurochkin I.V."/>
            <person name="Lareau L.F."/>
            <person name="Lazarevic D."/>
            <person name="Lipovich L."/>
            <person name="Liu J."/>
            <person name="Liuni S."/>
            <person name="McWilliam S."/>
            <person name="Madan Babu M."/>
            <person name="Madera M."/>
            <person name="Marchionni L."/>
            <person name="Matsuda H."/>
            <person name="Matsuzawa S."/>
            <person name="Miki H."/>
            <person name="Mignone F."/>
            <person name="Miyake S."/>
            <person name="Morris K."/>
            <person name="Mottagui-Tabar S."/>
            <person name="Mulder N."/>
            <person name="Nakano N."/>
            <person name="Nakauchi H."/>
            <person name="Ng P."/>
            <person name="Nilsson R."/>
            <person name="Nishiguchi S."/>
            <person name="Nishikawa S."/>
            <person name="Nori F."/>
            <person name="Ohara O."/>
            <person name="Okazaki Y."/>
            <person name="Orlando V."/>
            <person name="Pang K.C."/>
            <person name="Pavan W.J."/>
            <person name="Pavesi G."/>
            <person name="Pesole G."/>
            <person name="Petrovsky N."/>
            <person name="Piazza S."/>
            <person name="Reed J."/>
            <person name="Reid J.F."/>
            <person name="Ring B.Z."/>
            <person name="Ringwald M."/>
            <person name="Rost B."/>
            <person name="Ruan Y."/>
            <person name="Salzberg S.L."/>
            <person name="Sandelin A."/>
            <person name="Schneider C."/>
            <person name="Schoenbach C."/>
            <person name="Sekiguchi K."/>
            <person name="Semple C.A."/>
            <person name="Seno S."/>
            <person name="Sessa L."/>
            <person name="Sheng Y."/>
            <person name="Shibata Y."/>
            <person name="Shimada H."/>
            <person name="Shimada K."/>
            <person name="Silva D."/>
            <person name="Sinclair B."/>
            <person name="Sperling S."/>
            <person name="Stupka E."/>
            <person name="Sugiura K."/>
            <person name="Sultana R."/>
            <person name="Takenaka Y."/>
            <person name="Taki K."/>
            <person name="Tammoja K."/>
            <person name="Tan S.L."/>
            <person name="Tang S."/>
            <person name="Taylor M.S."/>
            <person name="Tegner J."/>
            <person name="Teichmann S.A."/>
            <person name="Ueda H.R."/>
            <person name="van Nimwegen E."/>
            <person name="Verardo R."/>
            <person name="Wei C.L."/>
            <person name="Yagi K."/>
            <person name="Yamanishi H."/>
            <person name="Zabarovsky E."/>
            <person name="Zhu S."/>
            <person name="Zimmer A."/>
            <person name="Hide W."/>
            <person name="Bult C."/>
            <person name="Grimmond S.M."/>
            <person name="Teasdale R.D."/>
            <person name="Liu E.T."/>
            <person name="Brusic V."/>
            <person name="Quackenbush J."/>
            <person name="Wahlestedt C."/>
            <person name="Mattick J.S."/>
            <person name="Hume D.A."/>
            <person name="Kai C."/>
            <person name="Sasaki D."/>
            <person name="Tomaru Y."/>
            <person name="Fukuda S."/>
            <person name="Kanamori-Katayama M."/>
            <person name="Suzuki M."/>
            <person name="Aoki J."/>
            <person name="Arakawa T."/>
            <person name="Iida J."/>
            <person name="Imamura K."/>
            <person name="Itoh M."/>
            <person name="Kato T."/>
            <person name="Kawaji H."/>
            <person name="Kawagashira N."/>
            <person name="Kawashima T."/>
            <person name="Kojima M."/>
            <person name="Kondo S."/>
            <person name="Konno H."/>
            <person name="Nakano K."/>
            <person name="Ninomiya N."/>
            <person name="Nishio T."/>
            <person name="Okada M."/>
            <person name="Plessy C."/>
            <person name="Shibata K."/>
            <person name="Shiraki T."/>
            <person name="Suzuki S."/>
            <person name="Tagami M."/>
            <person name="Waki K."/>
            <person name="Watahiki A."/>
            <person name="Okamura-Oho Y."/>
            <person name="Suzuki H."/>
            <person name="Kawai J."/>
            <person name="Hayashizaki Y."/>
        </authorList>
    </citation>
    <scope>NUCLEOTIDE SEQUENCE [LARGE SCALE MRNA]</scope>
    <source>
        <strain>C57BL/6J</strain>
        <tissue>Bone marrow</tissue>
        <tissue>Lung</tissue>
    </source>
</reference>
<reference key="3">
    <citation type="journal article" date="2004" name="Genome Res.">
        <title>The status, quality, and expansion of the NIH full-length cDNA project: the Mammalian Gene Collection (MGC).</title>
        <authorList>
            <consortium name="The MGC Project Team"/>
        </authorList>
    </citation>
    <scope>NUCLEOTIDE SEQUENCE [LARGE SCALE MRNA]</scope>
    <source>
        <strain>FVB/N</strain>
        <tissue>Kidney</tissue>
    </source>
</reference>
<reference key="4">
    <citation type="journal article" date="1995" name="Oncogene">
        <title>Molecular interactions of the Src homology 2 domain protein Shb with phosphotyrosine residues, tyrosine kinase receptors and Src homology 3 domain proteins.</title>
        <authorList>
            <person name="Karlsson T."/>
            <person name="Songyang Z."/>
            <person name="Landgren E."/>
            <person name="Lavergne C."/>
            <person name="Di Fiore P.P."/>
            <person name="Anafi M."/>
            <person name="Pawson T."/>
            <person name="Cantley L.C."/>
            <person name="Claesson-Welsh L."/>
            <person name="Welsh M."/>
        </authorList>
    </citation>
    <scope>INTERACTION WITH SHB</scope>
</reference>
<reference key="5">
    <citation type="journal article" date="1999" name="Nature">
        <title>EPS8 and E3B1 transduce signals from Ras to Rac.</title>
        <authorList>
            <person name="Scita G."/>
            <person name="Nordstrom J."/>
            <person name="Carbone R."/>
            <person name="Tenca P."/>
            <person name="Giardina G."/>
            <person name="Gutkind S."/>
            <person name="Bjarnegard M."/>
            <person name="Betsholtz C."/>
            <person name="Di Fiore P.P."/>
        </authorList>
    </citation>
    <scope>FUNCTION</scope>
    <scope>IDENTIFICATION IN A COMPLEX WITH ABI1 AND SOS1</scope>
    <scope>DISRUPTION PHENOTYPE</scope>
</reference>
<reference key="6">
    <citation type="journal article" date="2001" name="J. Cell Biol.">
        <title>An effector region in Eps8 is responsible for the activation of the Rac-specific GEF activity of Sos-1 and for the proper localization of the Rac-based actin-polymerizing machine.</title>
        <authorList>
            <person name="Scita G."/>
            <person name="Tenca P."/>
            <person name="Areces L.B."/>
            <person name="Tocchetti A."/>
            <person name="Frittoli E."/>
            <person name="Giardina G."/>
            <person name="Ponzanelli I."/>
            <person name="Sini P."/>
            <person name="Innocenti M."/>
            <person name="Di Fiore P.P."/>
        </authorList>
    </citation>
    <scope>FUNCTION</scope>
    <scope>SUBCELLULAR LOCATION</scope>
    <scope>INTERACTION WITH SOS1</scope>
</reference>
<reference key="7">
    <citation type="journal article" date="2002" name="Int. J. Biochem. Cell Biol.">
        <title>Eps8 in the midst of GTPases.</title>
        <authorList>
            <person name="Di Fiore P.P."/>
            <person name="Scita G."/>
        </authorList>
    </citation>
    <scope>REVIEW ON FUNCTION</scope>
</reference>
<reference key="8">
    <citation type="journal article" date="2004" name="Nat. Cell Biol.">
        <title>Eps8 controls actin-based motility by capping the barbed ends of actin filaments.</title>
        <authorList>
            <person name="Disanza A."/>
            <person name="Carlier M.F."/>
            <person name="Stradal T.E."/>
            <person name="Didry D."/>
            <person name="Frittoli E."/>
            <person name="Confalonieri S."/>
            <person name="Croce A."/>
            <person name="Wehland J."/>
            <person name="Di Fiore P.P."/>
            <person name="Scita G."/>
        </authorList>
    </citation>
    <scope>FUNCTION</scope>
    <scope>INTERACTION WITH ABI1</scope>
</reference>
<reference key="9">
    <citation type="journal article" date="2005" name="Nat. Biotechnol.">
        <title>Immunoaffinity profiling of tyrosine phosphorylation in cancer cells.</title>
        <authorList>
            <person name="Rush J."/>
            <person name="Moritz A."/>
            <person name="Lee K.A."/>
            <person name="Guo A."/>
            <person name="Goss V.L."/>
            <person name="Spek E.J."/>
            <person name="Zhang H."/>
            <person name="Zha X.-M."/>
            <person name="Polakiewicz R.D."/>
            <person name="Comb M.J."/>
        </authorList>
    </citation>
    <scope>IDENTIFICATION BY MASS SPECTROMETRY [LARGE SCALE ANALYSIS]</scope>
</reference>
<reference key="10">
    <citation type="journal article" date="2006" name="Mol. Cell. Proteomics">
        <title>Comprehensive identification of phosphorylation sites in postsynaptic density preparations.</title>
        <authorList>
            <person name="Trinidad J.C."/>
            <person name="Specht C.G."/>
            <person name="Thalhammer A."/>
            <person name="Schoepfer R."/>
            <person name="Burlingame A.L."/>
        </authorList>
    </citation>
    <scope>IDENTIFICATION BY MASS SPECTROMETRY [LARGE SCALE ANALYSIS]</scope>
    <source>
        <tissue>Brain</tissue>
    </source>
</reference>
<reference key="11">
    <citation type="journal article" date="2006" name="Nat. Cell Biol.">
        <title>Regulation of cell shape by Cdc42 is mediated by the synergic actin-bundling activity of the Eps8-IRSp53 complex.</title>
        <authorList>
            <person name="Disanza A."/>
            <person name="Mantoani S."/>
            <person name="Hertzog M."/>
            <person name="Gerboth S."/>
            <person name="Frittoli E."/>
            <person name="Steffen A."/>
            <person name="Berhoerster K."/>
            <person name="Kreienkamp H.J."/>
            <person name="Milanesi F."/>
            <person name="Di Fiore P.P."/>
            <person name="Ciliberto A."/>
            <person name="Stradal T.E."/>
            <person name="Scita G."/>
        </authorList>
    </citation>
    <scope>FUNCTION</scope>
    <scope>INTERACTION WITH BAIAP2</scope>
</reference>
<reference key="12">
    <citation type="journal article" date="2009" name="Genes Dev.">
        <title>Structure of human lanthionine synthetase C-like protein 1 and its interaction with Eps8 and glutathione.</title>
        <authorList>
            <person name="Zhang W."/>
            <person name="Wang L."/>
            <person name="Liu Y."/>
            <person name="Xu J."/>
            <person name="Zhu G."/>
            <person name="Cang H."/>
            <person name="Li X."/>
            <person name="Bartlam M."/>
            <person name="Hensley K."/>
            <person name="Li G."/>
            <person name="Rao Z."/>
            <person name="Zhang X.C."/>
        </authorList>
    </citation>
    <scope>INTERACTION WITH LANCL1</scope>
</reference>
<reference key="13">
    <citation type="journal article" date="2009" name="Immunity">
        <title>The phagosomal proteome in interferon-gamma-activated macrophages.</title>
        <authorList>
            <person name="Trost M."/>
            <person name="English L."/>
            <person name="Lemieux S."/>
            <person name="Courcelles M."/>
            <person name="Desjardins M."/>
            <person name="Thibault P."/>
        </authorList>
    </citation>
    <scope>PHOSPHORYLATION [LARGE SCALE ANALYSIS] AT SER-658</scope>
    <scope>IDENTIFICATION BY MASS SPECTROMETRY [LARGE SCALE ANALYSIS]</scope>
</reference>
<reference key="14">
    <citation type="journal article" date="2009" name="PLoS Biol.">
        <title>Eps8 regulates axonal filopodia in hippocampal neurons in response to brain-derived neurotrophic factor (BDNF).</title>
        <authorList>
            <person name="Menna E."/>
            <person name="Disanza A."/>
            <person name="Cagnoli C."/>
            <person name="Schenk U."/>
            <person name="Gelsomino G."/>
            <person name="Frittoli E."/>
            <person name="Hertzog M."/>
            <person name="Offenhauser N."/>
            <person name="Sawallisch C."/>
            <person name="Kreienkamp H.J."/>
            <person name="Gertler F.B."/>
            <person name="Di Fiore P.P."/>
            <person name="Scita G."/>
            <person name="Matteoli M."/>
        </authorList>
    </citation>
    <scope>FUNCTION</scope>
    <scope>TISSUE SPECIFICITY</scope>
    <scope>PHOSPHORYLATION AT SER-624 AND THR-628</scope>
    <scope>MUTAGENESIS OF SER-624 AND THR-628</scope>
</reference>
<reference key="15">
    <citation type="journal article" date="2010" name="Cell">
        <title>A tissue-specific atlas of mouse protein phosphorylation and expression.</title>
        <authorList>
            <person name="Huttlin E.L."/>
            <person name="Jedrychowski M.P."/>
            <person name="Elias J.E."/>
            <person name="Goswami T."/>
            <person name="Rad R."/>
            <person name="Beausoleil S.A."/>
            <person name="Villen J."/>
            <person name="Haas W."/>
            <person name="Sowa M.E."/>
            <person name="Gygi S.P."/>
        </authorList>
    </citation>
    <scope>PHOSPHORYLATION [LARGE SCALE ANALYSIS] AT THR-317; SER-658; SER-661; SER-684; SER-810 AND SER-814</scope>
    <scope>IDENTIFICATION BY MASS SPECTROMETRY [LARGE SCALE ANALYSIS]</scope>
    <source>
        <tissue>Brown adipose tissue</tissue>
        <tissue>Kidney</tissue>
        <tissue>Lung</tissue>
    </source>
</reference>
<reference key="16">
    <citation type="journal article" date="2010" name="PLoS Biol.">
        <title>Molecular basis for the dual function of Eps8 on actin dynamics: bundling and capping.</title>
        <authorList>
            <person name="Hertzog M."/>
            <person name="Milanesi F."/>
            <person name="Hazelwood L."/>
            <person name="Disanza A."/>
            <person name="Liu H."/>
            <person name="Perlade E."/>
            <person name="Malabarba M.G."/>
            <person name="Pasqualato S."/>
            <person name="Maiolica A."/>
            <person name="Confalonieri S."/>
            <person name="Le Clainche C."/>
            <person name="Offenhauser N."/>
            <person name="Block J."/>
            <person name="Rottner K."/>
            <person name="Di Fiore P.P."/>
            <person name="Carlier M.F."/>
            <person name="Volkmann N."/>
            <person name="Hanein D."/>
            <person name="Scita G."/>
        </authorList>
    </citation>
    <scope>FUNCTION</scope>
    <scope>MUTAGENESIS OF VAL-689; LEU-693; ARG-706 AND PHE-708</scope>
</reference>
<reference key="17">
    <citation type="journal article" date="2011" name="Curr. Biol.">
        <title>Regulation of stereocilia length by myosin XVa and whirlin depends on the actin-regulatory protein Eps8.</title>
        <authorList>
            <person name="Manor U."/>
            <person name="Disanza A."/>
            <person name="Grati M."/>
            <person name="Andrade L."/>
            <person name="Lin H."/>
            <person name="Di Fiore P.P."/>
            <person name="Scita G."/>
            <person name="Kachar B."/>
        </authorList>
    </citation>
    <scope>FUNCTION</scope>
    <scope>INTERACTION WITH MYO15A AND WHRN</scope>
    <scope>SUBCELLULAR LOCATION</scope>
    <scope>DISRUPTION PHENOTYPE</scope>
</reference>
<reference key="18">
    <citation type="journal article" date="2011" name="Immunity">
        <title>The signaling adaptor Eps8 is an essential actin capping protein for dendritic cell migration.</title>
        <authorList>
            <person name="Frittoli E."/>
            <person name="Matteoli G."/>
            <person name="Palamidessi A."/>
            <person name="Mazzini E."/>
            <person name="Maddaluno L."/>
            <person name="Disanza A."/>
            <person name="Yang C."/>
            <person name="Svitkina T."/>
            <person name="Rescigno M."/>
            <person name="Scita G."/>
        </authorList>
    </citation>
    <scope>FUNCTION</scope>
    <scope>DISRUPTION PHENOTYPE</scope>
</reference>
<reference key="19">
    <citation type="journal article" date="2013" name="Nat. Cell Biol.">
        <title>SCF(Fbxw5) mediates transient degradation of actin remodeller Eps8 to allow proper mitotic progression.</title>
        <authorList>
            <person name="Werner A."/>
            <person name="Disanza A."/>
            <person name="Reifenberger N."/>
            <person name="Habeck G."/>
            <person name="Becker J."/>
            <person name="Calabrese M."/>
            <person name="Urlaub H."/>
            <person name="Lorenz H."/>
            <person name="Schulman B."/>
            <person name="Scita G."/>
            <person name="Melchior F."/>
        </authorList>
    </citation>
    <scope>SUBCELLULAR LOCATION</scope>
    <scope>UBIQUITINATION</scope>
</reference>
<reference key="20">
    <citation type="journal article" date="2013" name="Proc. Natl. Acad. Sci. U.S.A.">
        <title>Progressive hearing loss and gradual deterioration of sensory hair bundles in the ears of mice lacking the actin-binding protein Eps8L2.</title>
        <authorList>
            <person name="Furness D.N."/>
            <person name="Johnson S.L."/>
            <person name="Manor U."/>
            <person name="Ruettiger L."/>
            <person name="Tocchetti A."/>
            <person name="Offenhauser N."/>
            <person name="Olt J."/>
            <person name="Goodyear R.J."/>
            <person name="Vijayakumar S."/>
            <person name="Dai Y."/>
            <person name="Hackney C.M."/>
            <person name="Franz C."/>
            <person name="Di Fiore P.P."/>
            <person name="Masetto S."/>
            <person name="Jones S.M."/>
            <person name="Knipper M."/>
            <person name="Holley M.C."/>
            <person name="Richardson G.P."/>
            <person name="Kachar B."/>
            <person name="Marcotti W."/>
        </authorList>
    </citation>
    <scope>TISSUE SPECIFICITY</scope>
    <scope>SUBCELLULAR LOCATION</scope>
</reference>
<reference key="21">
    <citation type="journal article" date="2014" name="Orphanet J. Rare Dis.">
        <title>EPS8, encoding an actin-binding protein of cochlear hair cell stereocilia, is a new causal gene for autosomal recessive profound deafness.</title>
        <authorList>
            <person name="Behlouli A."/>
            <person name="Bonnet C."/>
            <person name="Abdi S."/>
            <person name="Bouaita A."/>
            <person name="Lelli A."/>
            <person name="Hardelin J.P."/>
            <person name="Schietroma C."/>
            <person name="Rous Y."/>
            <person name="Louha M."/>
            <person name="Cheknane A."/>
            <person name="Lebdi H."/>
            <person name="Boudjelida K."/>
            <person name="Makrelouf M."/>
            <person name="Zenati A."/>
            <person name="Petit C."/>
        </authorList>
    </citation>
    <scope>SUBCELLULAR LOCATION</scope>
</reference>
<reference key="22">
    <citation type="journal article" date="1997" name="Nat. Struct. Biol.">
        <title>The SH3 domain of Eps8 exists as a novel intertwined dimer.</title>
        <authorList>
            <person name="Kishan K.V.R."/>
            <person name="Scita G."/>
            <person name="Wong W.T."/>
            <person name="di Fiore P.P."/>
            <person name="Newcomer M.E."/>
        </authorList>
    </citation>
    <scope>X-RAY CRYSTALLOGRAPHY (1.5 ANGSTROMS) OF 532-591</scope>
    <scope>HOMODIMERIZATION</scope>
</reference>
<feature type="chain" id="PRO_0000086995" description="Epidermal growth factor receptor kinase substrate 8">
    <location>
        <begin position="1"/>
        <end position="821"/>
    </location>
</feature>
<feature type="domain" description="PTB" evidence="4">
    <location>
        <begin position="64"/>
        <end position="194"/>
    </location>
</feature>
<feature type="domain" description="SH3" evidence="5">
    <location>
        <begin position="530"/>
        <end position="589"/>
    </location>
</feature>
<feature type="region of interest" description="Disordered" evidence="6">
    <location>
        <begin position="1"/>
        <end position="39"/>
    </location>
</feature>
<feature type="region of interest" description="Disordered" evidence="6">
    <location>
        <begin position="204"/>
        <end position="224"/>
    </location>
</feature>
<feature type="region of interest" description="Disordered" evidence="6">
    <location>
        <begin position="295"/>
        <end position="320"/>
    </location>
</feature>
<feature type="region of interest" description="Disordered" evidence="6">
    <location>
        <begin position="461"/>
        <end position="525"/>
    </location>
</feature>
<feature type="region of interest" description="Disordered" evidence="6">
    <location>
        <begin position="610"/>
        <end position="683"/>
    </location>
</feature>
<feature type="region of interest" description="Effector region">
    <location>
        <begin position="648"/>
        <end position="821"/>
    </location>
</feature>
<feature type="region of interest" description="Amphipathic helix">
    <location>
        <begin position="679"/>
        <end position="697"/>
    </location>
</feature>
<feature type="region of interest" description="Helix bundle 1">
    <location>
        <begin position="717"/>
        <end position="737"/>
    </location>
</feature>
<feature type="region of interest" description="Helix bundle 2">
    <location>
        <begin position="751"/>
        <end position="756"/>
    </location>
</feature>
<feature type="region of interest" description="Helix bundle 3">
    <location>
        <begin position="761"/>
        <end position="766"/>
    </location>
</feature>
<feature type="region of interest" description="Helix bundle 4">
    <location>
        <begin position="765"/>
        <end position="784"/>
    </location>
</feature>
<feature type="region of interest" description="Disordered" evidence="6">
    <location>
        <begin position="800"/>
        <end position="821"/>
    </location>
</feature>
<feature type="compositionally biased region" description="Polar residues" evidence="6">
    <location>
        <begin position="1"/>
        <end position="10"/>
    </location>
</feature>
<feature type="compositionally biased region" description="Polar residues" evidence="6">
    <location>
        <begin position="17"/>
        <end position="28"/>
    </location>
</feature>
<feature type="compositionally biased region" description="Pro residues" evidence="6">
    <location>
        <begin position="208"/>
        <end position="221"/>
    </location>
</feature>
<feature type="compositionally biased region" description="Basic residues" evidence="6">
    <location>
        <begin position="299"/>
        <end position="309"/>
    </location>
</feature>
<feature type="compositionally biased region" description="Basic and acidic residues" evidence="6">
    <location>
        <begin position="464"/>
        <end position="476"/>
    </location>
</feature>
<feature type="compositionally biased region" description="Pro residues" evidence="6">
    <location>
        <begin position="622"/>
        <end position="641"/>
    </location>
</feature>
<feature type="compositionally biased region" description="Low complexity" evidence="6">
    <location>
        <begin position="642"/>
        <end position="651"/>
    </location>
</feature>
<feature type="compositionally biased region" description="Basic and acidic residues" evidence="6">
    <location>
        <begin position="670"/>
        <end position="683"/>
    </location>
</feature>
<feature type="modified residue" description="Phosphoserine" evidence="2">
    <location>
        <position position="58"/>
    </location>
</feature>
<feature type="modified residue" description="Phosphothreonine" evidence="3">
    <location>
        <position position="223"/>
    </location>
</feature>
<feature type="modified residue" description="Phosphothreonine" evidence="23">
    <location>
        <position position="317"/>
    </location>
</feature>
<feature type="modified residue" description="Phosphoserine" evidence="3">
    <location>
        <position position="475"/>
    </location>
</feature>
<feature type="modified residue" description="Phosphoserine; by MAPK" evidence="12">
    <location>
        <position position="624"/>
    </location>
</feature>
<feature type="modified residue" description="Phosphothreonine; by MAPK" evidence="12">
    <location>
        <position position="628"/>
    </location>
</feature>
<feature type="modified residue" description="Phosphoserine" evidence="22 23">
    <location>
        <position position="658"/>
    </location>
</feature>
<feature type="modified residue" description="Phosphoserine" evidence="23">
    <location>
        <position position="661"/>
    </location>
</feature>
<feature type="modified residue" description="Phosphoserine" evidence="23">
    <location>
        <position position="684"/>
    </location>
</feature>
<feature type="modified residue" description="Phosphoserine" evidence="23">
    <location>
        <position position="810"/>
    </location>
</feature>
<feature type="modified residue" description="Phosphoserine" evidence="23">
    <location>
        <position position="814"/>
    </location>
</feature>
<feature type="mutagenesis site" description="Does not detach from actin following BDNF treatment; when associated with A-628." evidence="12">
    <original>S</original>
    <variation>A</variation>
    <location>
        <position position="624"/>
    </location>
</feature>
<feature type="mutagenesis site" description="Mimicks phosphorylation state; promotes detachment from actin in absence of BDNF treatment; when associated with E-628." evidence="12">
    <original>S</original>
    <variation>E</variation>
    <location>
        <position position="624"/>
    </location>
</feature>
<feature type="mutagenesis site" description="Does not detach from actin following BDNF treatment; when associated with A-624." evidence="12">
    <original>T</original>
    <variation>A</variation>
    <location>
        <position position="628"/>
    </location>
</feature>
<feature type="mutagenesis site" description="Mimicks phosphorylation state; promotes detachment from actin in absence of BDNF treatment; when associated with E-624." evidence="12">
    <original>T</original>
    <variation>E</variation>
    <location>
        <position position="628"/>
    </location>
</feature>
<feature type="mutagenesis site" description="Abolishes barbed-end actin-binding without affecting actin bundling activity." evidence="13">
    <original>V</original>
    <variation>D</variation>
    <location>
        <position position="689"/>
    </location>
</feature>
<feature type="mutagenesis site" description="Abolishes barbed-end actin-binding without affecting actin bundling activity." evidence="13">
    <original>L</original>
    <variation>D</variation>
    <location>
        <position position="693"/>
    </location>
</feature>
<feature type="mutagenesis site" description="Impairs both actin capping and bundling activities." evidence="13">
    <original>R</original>
    <variation>A</variation>
    <location>
        <position position="706"/>
    </location>
</feature>
<feature type="mutagenesis site" description="Impairs both actin capping and bundling activities." evidence="13">
    <original>F</original>
    <variation>A</variation>
    <location>
        <position position="708"/>
    </location>
</feature>
<feature type="sequence conflict" description="In Ref. 1; AAA16358 and 3; AAH16890." evidence="21" ref="1 3">
    <original>N</original>
    <variation>D</variation>
    <location>
        <position position="652"/>
    </location>
</feature>
<feature type="strand" evidence="24">
    <location>
        <begin position="534"/>
        <end position="539"/>
    </location>
</feature>
<feature type="strand" evidence="24">
    <location>
        <begin position="556"/>
        <end position="559"/>
    </location>
</feature>
<feature type="helix" evidence="24">
    <location>
        <begin position="561"/>
        <end position="563"/>
    </location>
</feature>
<feature type="strand" evidence="24">
    <location>
        <begin position="566"/>
        <end position="570"/>
    </location>
</feature>
<feature type="strand" evidence="24">
    <location>
        <begin position="576"/>
        <end position="580"/>
    </location>
</feature>
<feature type="helix" evidence="24">
    <location>
        <begin position="581"/>
        <end position="583"/>
    </location>
</feature>
<feature type="strand" evidence="24">
    <location>
        <begin position="584"/>
        <end position="587"/>
    </location>
</feature>
<sequence>MNGHMSNRSSGYGVYPSQLNGYGSSPPYSQMDREHSSRTSAKALYEQRKNYARDSVSSVSDVSQYRVEHLTTFVLDRKDAMITVEDGIRKLKLLDAKGKVWTQDMILQVDDRAVSLIDLESKNELENFPLNTISHCQAVVHACSYDSILALVCKEPTQSKPDLHLFQCDEVKANLISEDIESAISDSKGGKQKRRPEALRMIAKADPGIPPPPRAPAPVPPGTVTQVDVRSRVAAWSAWAADQGDFEKPRQYHEQEETPEMMAARIDRDVQILNHILDDIEFFITKLQKAAEAFSELSKRKKSKKSKRKGPGEGVLTLRAKPPPPDEFVDCFQKFKHGFNLLAKLKSHIQNPSASDLVHFLFTPLNMVVQATGGPELASSVLSPLLTKDTVDFLNYTATAEERKLWMSLGDSWVKVRAEWPKEQFIPPYVPRFRNGWEPPMLNFMGAPTEQDMYQLAESVANAEHQRKQDSKRLSTEHSNVSDYPPADGYAYSSSMYHRGPHADHGEAAMPFKSTPNHQVDRNYDAVKTQPKKYAKSKYDFVARNSSELSVMKDDVLEILDDRRQWWKVRNASGDSGFVPNNILDIMRTPESGVGRADPPYTHTIQKQRTEYGLRSADTPSAPSPPPTPAPVPVPLPPSVPAPVSVPKVPANVTRQNSSSSDSGGSIVRDSQRYKQLPVDRRKSQMEEVQDELFQRLTIGRSAAQRKFHVPRQNVPVINITYDSSPEEVKTWLQSKGFNPVTVNSLGVLNGAQLFSLNKDELRSVCPEGARVFNQITVQKAALEDSNGSSELQEIMRRRQEKISAAASDSGVESFDEGSSH</sequence>
<proteinExistence type="evidence at protein level"/>
<keyword id="KW-0002">3D-structure</keyword>
<keyword id="KW-0009">Actin-binding</keyword>
<keyword id="KW-1003">Cell membrane</keyword>
<keyword id="KW-0966">Cell projection</keyword>
<keyword id="KW-0963">Cytoplasm</keyword>
<keyword id="KW-0472">Membrane</keyword>
<keyword id="KW-0597">Phosphoprotein</keyword>
<keyword id="KW-1185">Reference proteome</keyword>
<keyword id="KW-0728">SH3 domain</keyword>
<keyword id="KW-0770">Synapse</keyword>
<keyword id="KW-0771">Synaptosome</keyword>
<keyword id="KW-0832">Ubl conjugation</keyword>
<comment type="function">
    <text evidence="7 8 9 10 12 13 14 15 20">Signaling adapter that controls various cellular protrusions by regulating actin cytoskeleton dynamics and architecture. Depending on its association with other signal transducers, can regulate different processes. Together with SOS1 and ABI1, forms a trimeric complex that participates in transduction of signals from Ras to Rac by activating the Rac-specific guanine nucleotide exchange factor (GEF) activity. Acts as a direct regulator of actin dynamics by binding actin filaments and has both barbed-end actin filament capping and actin bundling activities depending on the context. Displays barbed-end actin capping activity when associated with ABI1, thereby regulating actin-based motility process: capping activity is auto-inhibited and inhibition is relieved upon ABI1 interaction. Also shows actin bundling activity when associated with BAIAP2, enhancing BAIAP2-dependent membrane extensions and promoting filopodial protrusions. Involved in the regulation of processes such as axonal filopodia growth, stereocilia length, dendritic cell migration and cancer cell migration and invasion. Acts as a regulator of axonal filopodia formation in neurons: in the absence of neurotrophic factors, negatively regulates axonal filopodia formation via actin-capping activity. In contrast, it is phosphorylated in the presence of BDNF leading to inhibition of its actin-capping activity and stimulation of filopodia formation. Component of a complex with WHRN and MYO15A that localizes at stereocilia tips and is required for elongation of the stereocilia actin core. Indirectly involved in cell cycle progression; its degradation following ubiquitination being required during G2 phase to promote cell shape changes.</text>
</comment>
<comment type="subunit">
    <text evidence="7 8 9 10 11 14 19 20">Homodimer. Part of a complex consisting of ABI1, EPS8 and SOS1. Interacts with BAIAP2. Interacts with SHB and LANCL1. Interacts with EGFR; mediates EPS8 phosphorylation. Interacts with MYO15A and WHRN.</text>
</comment>
<comment type="interaction">
    <interactant intactId="EBI-375596">
        <id>Q08509</id>
    </interactant>
    <interactant intactId="EBI-375511">
        <id>Q8CBW3</id>
        <label>Abi1</label>
    </interactant>
    <organismsDiffer>false</organismsDiffer>
    <experiments>3</experiments>
</comment>
<comment type="interaction">
    <interactant intactId="EBI-375596">
        <id>Q08509</id>
    </interactant>
    <interactant intactId="EBI-375446">
        <id>Q8IZP0</id>
        <label>ABI1</label>
    </interactant>
    <organismsDiffer>true</organismsDiffer>
    <experiments>2</experiments>
</comment>
<comment type="interaction">
    <interactant intactId="EBI-375596">
        <id>Q08509</id>
    </interactant>
    <interactant intactId="EBI-525456">
        <id>Q9UQB8</id>
        <label>BAIAP2</label>
    </interactant>
    <organismsDiffer>true</organismsDiffer>
    <experiments>8</experiments>
</comment>
<comment type="interaction">
    <interactant intactId="EBI-375596">
        <id>Q08509</id>
    </interactant>
    <interactant intactId="EBI-3046631">
        <id>O43813</id>
        <label>LANCL1</label>
    </interactant>
    <organismsDiffer>true</organismsDiffer>
    <experiments>2</experiments>
</comment>
<comment type="interaction">
    <interactant intactId="EBI-375596">
        <id>Q08509</id>
    </interactant>
    <interactant intactId="EBI-73995">
        <id>P27361</id>
        <label>MAPK3</label>
    </interactant>
    <organismsDiffer>true</organismsDiffer>
    <experiments>2</experiments>
</comment>
<comment type="subcellular location">
    <subcellularLocation>
        <location>Cytoplasm</location>
        <location>Cell cortex</location>
    </subcellularLocation>
    <subcellularLocation>
        <location>Cell projection</location>
        <location>Ruffle membrane</location>
    </subcellularLocation>
    <subcellularLocation>
        <location evidence="1">Cell projection</location>
        <location evidence="1">Growth cone</location>
    </subcellularLocation>
    <subcellularLocation>
        <location evidence="17 18">Cell projection</location>
        <location evidence="17 18">Stereocilium</location>
    </subcellularLocation>
    <subcellularLocation>
        <location evidence="1">Synapse</location>
        <location evidence="1">Synaptosome</location>
    </subcellularLocation>
    <text evidence="17 18">Localizes at the tips of the stereocilia of the inner and outer hair cells (PubMed:23918390, PubMed:24741995). Localizes to the midzone of dividing cells.</text>
</comment>
<comment type="tissue specificity">
    <text evidence="12 17">Expressed in neuronal cell body and neurites, and prominently enriched in the axonal growth cone (PubMed:19564905). Expressed at the tips of cochlear hair cells stereocilia (PubMed:23918390).</text>
</comment>
<comment type="domain">
    <text evidence="8 13">The effector region is required for activating the Rac-specific guanine nucleotide exchange factor (GEF) activity (PubMed:11524436). It mediates both barbed-end actin capping and actin bundling activities (PubMed:20532239). The capping activity is mediated by an amphipathic helix that binds within the hydrophobic pocket at the barbed ends of actin blocking further addition of actin monomers, while the bundling activity is mediated by a compact 4 helix bundle, which contacts 3 actin subunits along the filament (PubMed:20532239).</text>
</comment>
<comment type="domain">
    <text evidence="1">The SH3 domain mediates interaction with SHB.</text>
</comment>
<comment type="PTM">
    <text evidence="16">Ubiquitinated by the SCF(FBXW5) E3 ubiquitin-protein ligase complex during G2 phase, leading to its transient degradation and subsequent cell shape changes required to allow mitotic progression. Reappears at the midzone of dividing cells.</text>
</comment>
<comment type="PTM">
    <text evidence="12 20">Phosphorylation at Ser-624 and Thr-628 by MAPK following BDNF treatment promotes removal from actin and filopodia formation. Phosphorylated by several receptor tyrosine kinases.</text>
</comment>
<comment type="disruption phenotype">
    <text evidence="7 14 15">No visible phenotype. Defects in PDGF-induced membrane ruffling due to defects in Ras to Rac signals. Dendritic cells are impaired in directional and chemotactic migration and are delayed in reaching the draining lymph node in vivo after inflammatory challenge. Mice show short stereocilia.</text>
</comment>
<comment type="similarity">
    <text evidence="21">Belongs to the EPS8 family.</text>
</comment>
<protein>
    <recommendedName>
        <fullName>Epidermal growth factor receptor kinase substrate 8</fullName>
    </recommendedName>
</protein>
<evidence type="ECO:0000250" key="1"/>
<evidence type="ECO:0000250" key="2">
    <source>
        <dbReference type="UniProtKB" id="F1M3L7"/>
    </source>
</evidence>
<evidence type="ECO:0000250" key="3">
    <source>
        <dbReference type="UniProtKB" id="Q12929"/>
    </source>
</evidence>
<evidence type="ECO:0000255" key="4"/>
<evidence type="ECO:0000255" key="5">
    <source>
        <dbReference type="PROSITE-ProRule" id="PRU00192"/>
    </source>
</evidence>
<evidence type="ECO:0000256" key="6">
    <source>
        <dbReference type="SAM" id="MobiDB-lite"/>
    </source>
</evidence>
<evidence type="ECO:0000269" key="7">
    <source>
    </source>
</evidence>
<evidence type="ECO:0000269" key="8">
    <source>
    </source>
</evidence>
<evidence type="ECO:0000269" key="9">
    <source>
    </source>
</evidence>
<evidence type="ECO:0000269" key="10">
    <source>
    </source>
</evidence>
<evidence type="ECO:0000269" key="11">
    <source>
    </source>
</evidence>
<evidence type="ECO:0000269" key="12">
    <source>
    </source>
</evidence>
<evidence type="ECO:0000269" key="13">
    <source>
    </source>
</evidence>
<evidence type="ECO:0000269" key="14">
    <source>
    </source>
</evidence>
<evidence type="ECO:0000269" key="15">
    <source>
    </source>
</evidence>
<evidence type="ECO:0000269" key="16">
    <source>
    </source>
</evidence>
<evidence type="ECO:0000269" key="17">
    <source>
    </source>
</evidence>
<evidence type="ECO:0000269" key="18">
    <source>
    </source>
</evidence>
<evidence type="ECO:0000269" key="19">
    <source>
    </source>
</evidence>
<evidence type="ECO:0000269" key="20">
    <source>
    </source>
</evidence>
<evidence type="ECO:0000305" key="21"/>
<evidence type="ECO:0007744" key="22">
    <source>
    </source>
</evidence>
<evidence type="ECO:0007744" key="23">
    <source>
    </source>
</evidence>
<evidence type="ECO:0007829" key="24">
    <source>
        <dbReference type="PDB" id="1I07"/>
    </source>
</evidence>
<dbReference type="EMBL" id="L21671">
    <property type="protein sequence ID" value="AAA16358.1"/>
    <property type="molecule type" value="mRNA"/>
</dbReference>
<dbReference type="EMBL" id="AK149683">
    <property type="protein sequence ID" value="BAE29023.1"/>
    <property type="molecule type" value="mRNA"/>
</dbReference>
<dbReference type="EMBL" id="AK166156">
    <property type="protein sequence ID" value="BAE38601.1"/>
    <property type="molecule type" value="mRNA"/>
</dbReference>
<dbReference type="EMBL" id="BC016890">
    <property type="protein sequence ID" value="AAH16890.1"/>
    <property type="molecule type" value="mRNA"/>
</dbReference>
<dbReference type="CCDS" id="CCDS20665.1"/>
<dbReference type="PIR" id="S39983">
    <property type="entry name" value="S39983"/>
</dbReference>
<dbReference type="RefSeq" id="NP_001258516.1">
    <property type="nucleotide sequence ID" value="NM_001271587.1"/>
</dbReference>
<dbReference type="RefSeq" id="NP_001258517.1">
    <property type="nucleotide sequence ID" value="NM_001271588.2"/>
</dbReference>
<dbReference type="RefSeq" id="NP_001258518.1">
    <property type="nucleotide sequence ID" value="NM_001271589.1"/>
</dbReference>
<dbReference type="RefSeq" id="NP_001258524.1">
    <property type="nucleotide sequence ID" value="NM_001271595.2"/>
</dbReference>
<dbReference type="RefSeq" id="NP_001396676.1">
    <property type="nucleotide sequence ID" value="NM_001409747.1"/>
</dbReference>
<dbReference type="RefSeq" id="NP_031971.2">
    <property type="nucleotide sequence ID" value="NM_007945.4"/>
</dbReference>
<dbReference type="RefSeq" id="XP_011239506.1">
    <property type="nucleotide sequence ID" value="XM_011241204.2"/>
</dbReference>
<dbReference type="RefSeq" id="XP_030111005.1">
    <property type="nucleotide sequence ID" value="XM_030255145.1"/>
</dbReference>
<dbReference type="PDB" id="1AOJ">
    <property type="method" value="X-ray"/>
    <property type="resolution" value="2.50 A"/>
    <property type="chains" value="A/B=532-591"/>
</dbReference>
<dbReference type="PDB" id="1I07">
    <property type="method" value="X-ray"/>
    <property type="resolution" value="1.80 A"/>
    <property type="chains" value="A/B=532-591"/>
</dbReference>
<dbReference type="PDB" id="1I0C">
    <property type="method" value="X-ray"/>
    <property type="resolution" value="2.00 A"/>
    <property type="chains" value="A/B=532-591"/>
</dbReference>
<dbReference type="PDBsum" id="1AOJ"/>
<dbReference type="PDBsum" id="1I07"/>
<dbReference type="PDBsum" id="1I0C"/>
<dbReference type="SMR" id="Q08509"/>
<dbReference type="BioGRID" id="199491">
    <property type="interactions" value="34"/>
</dbReference>
<dbReference type="CORUM" id="Q08509"/>
<dbReference type="DIP" id="DIP-32858N"/>
<dbReference type="FunCoup" id="Q08509">
    <property type="interactions" value="577"/>
</dbReference>
<dbReference type="IntAct" id="Q08509">
    <property type="interactions" value="10"/>
</dbReference>
<dbReference type="MINT" id="Q08509"/>
<dbReference type="STRING" id="10090.ENSMUSP00000052776"/>
<dbReference type="GlyGen" id="Q08509">
    <property type="glycosylation" value="6 sites, 3 N-linked glycans (4 sites), 1 O-linked glycan (1 site)"/>
</dbReference>
<dbReference type="iPTMnet" id="Q08509"/>
<dbReference type="PhosphoSitePlus" id="Q08509"/>
<dbReference type="jPOST" id="Q08509"/>
<dbReference type="PaxDb" id="10090-ENSMUSP00000052776"/>
<dbReference type="PeptideAtlas" id="Q08509"/>
<dbReference type="ProteomicsDB" id="277891"/>
<dbReference type="Antibodypedia" id="1288">
    <property type="antibodies" value="376 antibodies from 38 providers"/>
</dbReference>
<dbReference type="DNASU" id="13860"/>
<dbReference type="Ensembl" id="ENSMUST00000058210.13">
    <property type="protein sequence ID" value="ENSMUSP00000052776.7"/>
    <property type="gene ID" value="ENSMUSG00000015766.15"/>
</dbReference>
<dbReference type="Ensembl" id="ENSMUST00000100841.9">
    <property type="protein sequence ID" value="ENSMUSP00000098402.3"/>
    <property type="gene ID" value="ENSMUSG00000015766.15"/>
</dbReference>
<dbReference type="Ensembl" id="ENSMUST00000111878.8">
    <property type="protein sequence ID" value="ENSMUSP00000107509.2"/>
    <property type="gene ID" value="ENSMUSG00000015766.15"/>
</dbReference>
<dbReference type="GeneID" id="13860"/>
<dbReference type="KEGG" id="mmu:13860"/>
<dbReference type="UCSC" id="uc009emz.2">
    <property type="organism name" value="mouse"/>
</dbReference>
<dbReference type="AGR" id="MGI:104684"/>
<dbReference type="CTD" id="2059"/>
<dbReference type="MGI" id="MGI:104684">
    <property type="gene designation" value="Eps8"/>
</dbReference>
<dbReference type="VEuPathDB" id="HostDB:ENSMUSG00000015766"/>
<dbReference type="eggNOG" id="KOG3557">
    <property type="taxonomic scope" value="Eukaryota"/>
</dbReference>
<dbReference type="GeneTree" id="ENSGT00940000156403"/>
<dbReference type="InParanoid" id="Q08509"/>
<dbReference type="OMA" id="NKNWWEC"/>
<dbReference type="OrthoDB" id="4680325at2759"/>
<dbReference type="PhylomeDB" id="Q08509"/>
<dbReference type="TreeFam" id="TF313069"/>
<dbReference type="BioGRID-ORCS" id="13860">
    <property type="hits" value="2 hits in 80 CRISPR screens"/>
</dbReference>
<dbReference type="CD-CODE" id="CE726F99">
    <property type="entry name" value="Postsynaptic density"/>
</dbReference>
<dbReference type="ChiTaRS" id="Eps8">
    <property type="organism name" value="mouse"/>
</dbReference>
<dbReference type="EvolutionaryTrace" id="Q08509"/>
<dbReference type="PRO" id="PR:Q08509"/>
<dbReference type="Proteomes" id="UP000000589">
    <property type="component" value="Chromosome 6"/>
</dbReference>
<dbReference type="RNAct" id="Q08509">
    <property type="molecule type" value="protein"/>
</dbReference>
<dbReference type="Bgee" id="ENSMUSG00000015766">
    <property type="expression patterns" value="Expressed in secondary oocyte and 285 other cell types or tissues"/>
</dbReference>
<dbReference type="ExpressionAtlas" id="Q08509">
    <property type="expression patterns" value="baseline and differential"/>
</dbReference>
<dbReference type="GO" id="GO:0005903">
    <property type="term" value="C:brush border"/>
    <property type="evidence" value="ECO:0000314"/>
    <property type="project" value="UniProtKB"/>
</dbReference>
<dbReference type="GO" id="GO:0005938">
    <property type="term" value="C:cell cortex"/>
    <property type="evidence" value="ECO:0000314"/>
    <property type="project" value="UniProtKB"/>
</dbReference>
<dbReference type="GO" id="GO:0005829">
    <property type="term" value="C:cytosol"/>
    <property type="evidence" value="ECO:0000304"/>
    <property type="project" value="Reactome"/>
</dbReference>
<dbReference type="GO" id="GO:0098978">
    <property type="term" value="C:glutamatergic synapse"/>
    <property type="evidence" value="ECO:0000314"/>
    <property type="project" value="SynGO"/>
</dbReference>
<dbReference type="GO" id="GO:0030426">
    <property type="term" value="C:growth cone"/>
    <property type="evidence" value="ECO:0007669"/>
    <property type="project" value="UniProtKB-SubCell"/>
</dbReference>
<dbReference type="GO" id="GO:0017146">
    <property type="term" value="C:NMDA selective glutamate receptor complex"/>
    <property type="evidence" value="ECO:0000314"/>
    <property type="project" value="MGI"/>
</dbReference>
<dbReference type="GO" id="GO:0014069">
    <property type="term" value="C:postsynaptic density"/>
    <property type="evidence" value="ECO:0000314"/>
    <property type="project" value="MGI"/>
</dbReference>
<dbReference type="GO" id="GO:0032587">
    <property type="term" value="C:ruffle membrane"/>
    <property type="evidence" value="ECO:0000314"/>
    <property type="project" value="UniProtKB"/>
</dbReference>
<dbReference type="GO" id="GO:0032420">
    <property type="term" value="C:stereocilium"/>
    <property type="evidence" value="ECO:0000314"/>
    <property type="project" value="UniProtKB"/>
</dbReference>
<dbReference type="GO" id="GO:0032421">
    <property type="term" value="C:stereocilium bundle"/>
    <property type="evidence" value="ECO:0000314"/>
    <property type="project" value="UniProtKB"/>
</dbReference>
<dbReference type="GO" id="GO:0032426">
    <property type="term" value="C:stereocilium tip"/>
    <property type="evidence" value="ECO:0000314"/>
    <property type="project" value="UniProtKB"/>
</dbReference>
<dbReference type="GO" id="GO:0045202">
    <property type="term" value="C:synapse"/>
    <property type="evidence" value="ECO:0000314"/>
    <property type="project" value="MGI"/>
</dbReference>
<dbReference type="GO" id="GO:0003779">
    <property type="term" value="F:actin binding"/>
    <property type="evidence" value="ECO:0000314"/>
    <property type="project" value="UniProtKB"/>
</dbReference>
<dbReference type="GO" id="GO:0031267">
    <property type="term" value="F:small GTPase binding"/>
    <property type="evidence" value="ECO:0000314"/>
    <property type="project" value="UniProtKB"/>
</dbReference>
<dbReference type="GO" id="GO:0051764">
    <property type="term" value="P:actin crosslink formation"/>
    <property type="evidence" value="ECO:0000314"/>
    <property type="project" value="UniProtKB"/>
</dbReference>
<dbReference type="GO" id="GO:0030036">
    <property type="term" value="P:actin cytoskeleton organization"/>
    <property type="evidence" value="ECO:0000315"/>
    <property type="project" value="MGI"/>
</dbReference>
<dbReference type="GO" id="GO:0051017">
    <property type="term" value="P:actin filament bundle assembly"/>
    <property type="evidence" value="ECO:0000314"/>
    <property type="project" value="UniProtKB"/>
</dbReference>
<dbReference type="GO" id="GO:0070358">
    <property type="term" value="P:actin polymerization-dependent cell motility"/>
    <property type="evidence" value="ECO:0000314"/>
    <property type="project" value="UniProtKB"/>
</dbReference>
<dbReference type="GO" id="GO:0008344">
    <property type="term" value="P:adult locomotory behavior"/>
    <property type="evidence" value="ECO:0000315"/>
    <property type="project" value="MGI"/>
</dbReference>
<dbReference type="GO" id="GO:0051016">
    <property type="term" value="P:barbed-end actin filament capping"/>
    <property type="evidence" value="ECO:0000314"/>
    <property type="project" value="UniProtKB"/>
</dbReference>
<dbReference type="GO" id="GO:0048149">
    <property type="term" value="P:behavioral response to ethanol"/>
    <property type="evidence" value="ECO:0000315"/>
    <property type="project" value="MGI"/>
</dbReference>
<dbReference type="GO" id="GO:1990830">
    <property type="term" value="P:cellular response to leukemia inhibitory factor"/>
    <property type="evidence" value="ECO:0000270"/>
    <property type="project" value="MGI"/>
</dbReference>
<dbReference type="GO" id="GO:0036336">
    <property type="term" value="P:dendritic cell migration"/>
    <property type="evidence" value="ECO:0000315"/>
    <property type="project" value="UniProtKB"/>
</dbReference>
<dbReference type="GO" id="GO:0010458">
    <property type="term" value="P:exit from mitosis"/>
    <property type="evidence" value="ECO:0000315"/>
    <property type="project" value="UniProtKB"/>
</dbReference>
<dbReference type="GO" id="GO:0016601">
    <property type="term" value="P:Rac protein signal transduction"/>
    <property type="evidence" value="ECO:0000314"/>
    <property type="project" value="UniProtKB"/>
</dbReference>
<dbReference type="GO" id="GO:0030832">
    <property type="term" value="P:regulation of actin filament length"/>
    <property type="evidence" value="ECO:0000315"/>
    <property type="project" value="UniProtKB"/>
</dbReference>
<dbReference type="GO" id="GO:0008360">
    <property type="term" value="P:regulation of cell shape"/>
    <property type="evidence" value="ECO:0000315"/>
    <property type="project" value="UniProtKB"/>
</dbReference>
<dbReference type="GO" id="GO:0099072">
    <property type="term" value="P:regulation of postsynaptic membrane neurotransmitter receptor levels"/>
    <property type="evidence" value="ECO:0000314"/>
    <property type="project" value="SynGO"/>
</dbReference>
<dbReference type="CDD" id="cd01210">
    <property type="entry name" value="PTB_EPS8"/>
    <property type="match status" value="1"/>
</dbReference>
<dbReference type="CDD" id="cd09540">
    <property type="entry name" value="SAM_EPS8-like"/>
    <property type="match status" value="1"/>
</dbReference>
<dbReference type="CDD" id="cd11764">
    <property type="entry name" value="SH3_Eps8"/>
    <property type="match status" value="1"/>
</dbReference>
<dbReference type="FunFam" id="1.10.150.50:FF:000023">
    <property type="entry name" value="Epidermal growth factor receptor kinase substrate 8"/>
    <property type="match status" value="1"/>
</dbReference>
<dbReference type="FunFam" id="2.30.30.40:FF:000071">
    <property type="entry name" value="Epidermal growth factor receptor kinase substrate 8"/>
    <property type="match status" value="1"/>
</dbReference>
<dbReference type="FunFam" id="2.30.29.30:FF:000174">
    <property type="entry name" value="epidermal growth factor receptor kinase substrate 8"/>
    <property type="match status" value="1"/>
</dbReference>
<dbReference type="Gene3D" id="2.30.29.30">
    <property type="entry name" value="Pleckstrin-homology domain (PH domain)/Phosphotyrosine-binding domain (PTB)"/>
    <property type="match status" value="1"/>
</dbReference>
<dbReference type="Gene3D" id="2.30.30.40">
    <property type="entry name" value="SH3 Domains"/>
    <property type="match status" value="1"/>
</dbReference>
<dbReference type="Gene3D" id="1.10.150.50">
    <property type="entry name" value="Transcription Factor, Ets-1"/>
    <property type="match status" value="1"/>
</dbReference>
<dbReference type="InterPro" id="IPR039801">
    <property type="entry name" value="EPS8-like"/>
</dbReference>
<dbReference type="InterPro" id="IPR055093">
    <property type="entry name" value="EPS8_2nd"/>
</dbReference>
<dbReference type="InterPro" id="IPR033928">
    <property type="entry name" value="EPS8_PTB"/>
</dbReference>
<dbReference type="InterPro" id="IPR035462">
    <property type="entry name" value="Eps8_SH3"/>
</dbReference>
<dbReference type="InterPro" id="IPR011993">
    <property type="entry name" value="PH-like_dom_sf"/>
</dbReference>
<dbReference type="InterPro" id="IPR013625">
    <property type="entry name" value="PTB"/>
</dbReference>
<dbReference type="InterPro" id="IPR006020">
    <property type="entry name" value="PTB/PI_dom"/>
</dbReference>
<dbReference type="InterPro" id="IPR013761">
    <property type="entry name" value="SAM/pointed_sf"/>
</dbReference>
<dbReference type="InterPro" id="IPR041418">
    <property type="entry name" value="SAM_3"/>
</dbReference>
<dbReference type="InterPro" id="IPR036028">
    <property type="entry name" value="SH3-like_dom_sf"/>
</dbReference>
<dbReference type="InterPro" id="IPR001452">
    <property type="entry name" value="SH3_domain"/>
</dbReference>
<dbReference type="PANTHER" id="PTHR12287:SF21">
    <property type="entry name" value="EPIDERMAL GROWTH FACTOR RECEPTOR KINASE SUBSTRATE 8"/>
    <property type="match status" value="1"/>
</dbReference>
<dbReference type="PANTHER" id="PTHR12287">
    <property type="entry name" value="EPIDERMAL GROWTH FACTOR RECEPTOR KINASE SUBSTRATE EPS8-RELATED PROTEIN"/>
    <property type="match status" value="1"/>
</dbReference>
<dbReference type="Pfam" id="PF22975">
    <property type="entry name" value="EPS8_2nd"/>
    <property type="match status" value="1"/>
</dbReference>
<dbReference type="Pfam" id="PF08416">
    <property type="entry name" value="PTB"/>
    <property type="match status" value="1"/>
</dbReference>
<dbReference type="Pfam" id="PF18016">
    <property type="entry name" value="SAM_3"/>
    <property type="match status" value="1"/>
</dbReference>
<dbReference type="Pfam" id="PF00018">
    <property type="entry name" value="SH3_1"/>
    <property type="match status" value="1"/>
</dbReference>
<dbReference type="SMART" id="SM00462">
    <property type="entry name" value="PTB"/>
    <property type="match status" value="1"/>
</dbReference>
<dbReference type="SMART" id="SM00326">
    <property type="entry name" value="SH3"/>
    <property type="match status" value="1"/>
</dbReference>
<dbReference type="SUPFAM" id="SSF50729">
    <property type="entry name" value="PH domain-like"/>
    <property type="match status" value="1"/>
</dbReference>
<dbReference type="SUPFAM" id="SSF50044">
    <property type="entry name" value="SH3-domain"/>
    <property type="match status" value="1"/>
</dbReference>
<dbReference type="PROSITE" id="PS50002">
    <property type="entry name" value="SH3"/>
    <property type="match status" value="1"/>
</dbReference>